<keyword id="KW-0012">Acyltransferase</keyword>
<keyword id="KW-0808">Transferase</keyword>
<gene>
    <name type="ordered locus">SAS0989</name>
</gene>
<name>ATSE_STAAS</name>
<accession>Q6GAF9</accession>
<comment type="function">
    <text evidence="1">Could catalyze the transfer of an acetyl group from acetyl coenzyme A (AcCoA) to an acceptor substrate and release both CoA and the acetylated product.</text>
</comment>
<comment type="similarity">
    <text evidence="4">Belongs to the UPF0039 (ElaA) family.</text>
</comment>
<proteinExistence type="inferred from homology"/>
<protein>
    <recommendedName>
        <fullName evidence="1">Putative acetyltransferase SAS0989</fullName>
        <ecNumber>2.3.1.-</ecNumber>
    </recommendedName>
    <alternativeName>
        <fullName evidence="1">GCN5-related N-acetyltransferase</fullName>
        <shortName evidence="1">GNAT</shortName>
    </alternativeName>
</protein>
<sequence length="144" mass="16556">MFSKVNNQKMLEDCFYIRKKVFVEEQGVPEESEIDEYESESIHLIGYDNGQPVATARIRPINETTVKIERVAVMKSHRGQGMGRMLMQAVESLAKDEGFYVATMNAQCHAIPFYESLNFKMRGNIFLEEGIEHIEMTKKLTSLN</sequence>
<organism>
    <name type="scientific">Staphylococcus aureus (strain MSSA476)</name>
    <dbReference type="NCBI Taxonomy" id="282459"/>
    <lineage>
        <taxon>Bacteria</taxon>
        <taxon>Bacillati</taxon>
        <taxon>Bacillota</taxon>
        <taxon>Bacilli</taxon>
        <taxon>Bacillales</taxon>
        <taxon>Staphylococcaceae</taxon>
        <taxon>Staphylococcus</taxon>
    </lineage>
</organism>
<feature type="chain" id="PRO_0000201927" description="Putative acetyltransferase SAS0989">
    <location>
        <begin position="1"/>
        <end position="144"/>
    </location>
</feature>
<feature type="domain" description="N-acetyltransferase" evidence="3">
    <location>
        <begin position="1"/>
        <end position="141"/>
    </location>
</feature>
<feature type="binding site" evidence="2">
    <location>
        <begin position="71"/>
        <end position="73"/>
    </location>
    <ligand>
        <name>CoA</name>
        <dbReference type="ChEBI" id="CHEBI:57287"/>
    </ligand>
</feature>
<feature type="binding site" evidence="2">
    <location>
        <position position="79"/>
    </location>
    <ligand>
        <name>CoA</name>
        <dbReference type="ChEBI" id="CHEBI:57287"/>
    </ligand>
</feature>
<feature type="binding site" evidence="2">
    <location>
        <begin position="112"/>
        <end position="114"/>
    </location>
    <ligand>
        <name>CoA</name>
        <dbReference type="ChEBI" id="CHEBI:57287"/>
    </ligand>
</feature>
<evidence type="ECO:0000250" key="1">
    <source>
        <dbReference type="UniProtKB" id="Q5HH30"/>
    </source>
</evidence>
<evidence type="ECO:0000250" key="2">
    <source>
        <dbReference type="UniProtKB" id="Q9I0Q8"/>
    </source>
</evidence>
<evidence type="ECO:0000255" key="3">
    <source>
        <dbReference type="PROSITE-ProRule" id="PRU00532"/>
    </source>
</evidence>
<evidence type="ECO:0000305" key="4"/>
<dbReference type="EC" id="2.3.1.-"/>
<dbReference type="EMBL" id="BX571857">
    <property type="protein sequence ID" value="CAG42764.1"/>
    <property type="molecule type" value="Genomic_DNA"/>
</dbReference>
<dbReference type="RefSeq" id="WP_000491986.1">
    <property type="nucleotide sequence ID" value="NC_002953.3"/>
</dbReference>
<dbReference type="SMR" id="Q6GAF9"/>
<dbReference type="KEGG" id="sas:SAS0989"/>
<dbReference type="HOGENOM" id="CLU_056607_6_2_9"/>
<dbReference type="GO" id="GO:0016747">
    <property type="term" value="F:acyltransferase activity, transferring groups other than amino-acyl groups"/>
    <property type="evidence" value="ECO:0000250"/>
    <property type="project" value="UniProtKB"/>
</dbReference>
<dbReference type="GO" id="GO:0004343">
    <property type="term" value="F:glucosamine 6-phosphate N-acetyltransferase activity"/>
    <property type="evidence" value="ECO:0007669"/>
    <property type="project" value="TreeGrafter"/>
</dbReference>
<dbReference type="CDD" id="cd04301">
    <property type="entry name" value="NAT_SF"/>
    <property type="match status" value="1"/>
</dbReference>
<dbReference type="FunFam" id="3.40.630.30:FF:000131">
    <property type="entry name" value="Acetyltransferase, GNAT family"/>
    <property type="match status" value="1"/>
</dbReference>
<dbReference type="Gene3D" id="3.40.630.30">
    <property type="match status" value="1"/>
</dbReference>
<dbReference type="InterPro" id="IPR016181">
    <property type="entry name" value="Acyl_CoA_acyltransferase"/>
</dbReference>
<dbReference type="InterPro" id="IPR000182">
    <property type="entry name" value="GNAT_dom"/>
</dbReference>
<dbReference type="InterPro" id="IPR039143">
    <property type="entry name" value="GNPNAT1-like"/>
</dbReference>
<dbReference type="PANTHER" id="PTHR13355">
    <property type="entry name" value="GLUCOSAMINE 6-PHOSPHATE N-ACETYLTRANSFERASE"/>
    <property type="match status" value="1"/>
</dbReference>
<dbReference type="PANTHER" id="PTHR13355:SF11">
    <property type="entry name" value="GLUCOSAMINE 6-PHOSPHATE N-ACETYLTRANSFERASE"/>
    <property type="match status" value="1"/>
</dbReference>
<dbReference type="Pfam" id="PF00583">
    <property type="entry name" value="Acetyltransf_1"/>
    <property type="match status" value="1"/>
</dbReference>
<dbReference type="SUPFAM" id="SSF55729">
    <property type="entry name" value="Acyl-CoA N-acyltransferases (Nat)"/>
    <property type="match status" value="1"/>
</dbReference>
<dbReference type="PROSITE" id="PS51186">
    <property type="entry name" value="GNAT"/>
    <property type="match status" value="1"/>
</dbReference>
<reference key="1">
    <citation type="journal article" date="2004" name="Proc. Natl. Acad. Sci. U.S.A.">
        <title>Complete genomes of two clinical Staphylococcus aureus strains: evidence for the rapid evolution of virulence and drug resistance.</title>
        <authorList>
            <person name="Holden M.T.G."/>
            <person name="Feil E.J."/>
            <person name="Lindsay J.A."/>
            <person name="Peacock S.J."/>
            <person name="Day N.P.J."/>
            <person name="Enright M.C."/>
            <person name="Foster T.J."/>
            <person name="Moore C.E."/>
            <person name="Hurst L."/>
            <person name="Atkin R."/>
            <person name="Barron A."/>
            <person name="Bason N."/>
            <person name="Bentley S.D."/>
            <person name="Chillingworth C."/>
            <person name="Chillingworth T."/>
            <person name="Churcher C."/>
            <person name="Clark L."/>
            <person name="Corton C."/>
            <person name="Cronin A."/>
            <person name="Doggett J."/>
            <person name="Dowd L."/>
            <person name="Feltwell T."/>
            <person name="Hance Z."/>
            <person name="Harris B."/>
            <person name="Hauser H."/>
            <person name="Holroyd S."/>
            <person name="Jagels K."/>
            <person name="James K.D."/>
            <person name="Lennard N."/>
            <person name="Line A."/>
            <person name="Mayes R."/>
            <person name="Moule S."/>
            <person name="Mungall K."/>
            <person name="Ormond D."/>
            <person name="Quail M.A."/>
            <person name="Rabbinowitsch E."/>
            <person name="Rutherford K.M."/>
            <person name="Sanders M."/>
            <person name="Sharp S."/>
            <person name="Simmonds M."/>
            <person name="Stevens K."/>
            <person name="Whitehead S."/>
            <person name="Barrell B.G."/>
            <person name="Spratt B.G."/>
            <person name="Parkhill J."/>
        </authorList>
    </citation>
    <scope>NUCLEOTIDE SEQUENCE [LARGE SCALE GENOMIC DNA]</scope>
    <source>
        <strain>MSSA476</strain>
    </source>
</reference>